<name>SYDP_VIBA3</name>
<feature type="chain" id="PRO_1000163949" description="Protein Syd">
    <location>
        <begin position="1"/>
        <end position="181"/>
    </location>
</feature>
<proteinExistence type="inferred from homology"/>
<comment type="function">
    <text evidence="1">Interacts with the SecY protein in vivo. May bind preferentially to an uncomplexed state of SecY, thus functioning either as a chelating agent for excess SecY in the cell or as a regulatory factor that negatively controls the translocase function.</text>
</comment>
<comment type="subcellular location">
    <subcellularLocation>
        <location evidence="1">Cell inner membrane</location>
        <topology evidence="1">Peripheral membrane protein</topology>
        <orientation evidence="1">Cytoplasmic side</orientation>
    </subcellularLocation>
    <text evidence="1">Loosely associated with the cytoplasmic side of the inner membrane, probably via SecY.</text>
</comment>
<comment type="similarity">
    <text evidence="1">Belongs to the Syd family.</text>
</comment>
<reference key="1">
    <citation type="submission" date="2009-02" db="EMBL/GenBank/DDBJ databases">
        <title>Vibrio splendidus str. LGP32 complete genome.</title>
        <authorList>
            <person name="Mazel D."/>
            <person name="Le Roux F."/>
        </authorList>
    </citation>
    <scope>NUCLEOTIDE SEQUENCE [LARGE SCALE GENOMIC DNA]</scope>
    <source>
        <strain>LGP32</strain>
    </source>
</reference>
<protein>
    <recommendedName>
        <fullName evidence="1">Protein Syd</fullName>
    </recommendedName>
</protein>
<gene>
    <name evidence="1" type="primary">syd</name>
    <name type="ordered locus">VS_2389</name>
</gene>
<keyword id="KW-0997">Cell inner membrane</keyword>
<keyword id="KW-1003">Cell membrane</keyword>
<keyword id="KW-0472">Membrane</keyword>
<organism>
    <name type="scientific">Vibrio atlanticus (strain LGP32)</name>
    <name type="common">Vibrio splendidus (strain Mel32)</name>
    <dbReference type="NCBI Taxonomy" id="575788"/>
    <lineage>
        <taxon>Bacteria</taxon>
        <taxon>Pseudomonadati</taxon>
        <taxon>Pseudomonadota</taxon>
        <taxon>Gammaproteobacteria</taxon>
        <taxon>Vibrionales</taxon>
        <taxon>Vibrionaceae</taxon>
        <taxon>Vibrio</taxon>
    </lineage>
</organism>
<dbReference type="EMBL" id="FM954972">
    <property type="protein sequence ID" value="CAV19549.1"/>
    <property type="molecule type" value="Genomic_DNA"/>
</dbReference>
<dbReference type="SMR" id="B7VIV3"/>
<dbReference type="STRING" id="575788.VS_2389"/>
<dbReference type="KEGG" id="vsp:VS_2389"/>
<dbReference type="PATRIC" id="fig|575788.5.peg.3652"/>
<dbReference type="eggNOG" id="ENOG502ZCMR">
    <property type="taxonomic scope" value="Bacteria"/>
</dbReference>
<dbReference type="HOGENOM" id="CLU_121866_0_0_6"/>
<dbReference type="Proteomes" id="UP000009100">
    <property type="component" value="Chromosome 1"/>
</dbReference>
<dbReference type="GO" id="GO:0009898">
    <property type="term" value="C:cytoplasmic side of plasma membrane"/>
    <property type="evidence" value="ECO:0007669"/>
    <property type="project" value="InterPro"/>
</dbReference>
<dbReference type="CDD" id="cd16323">
    <property type="entry name" value="Syd"/>
    <property type="match status" value="1"/>
</dbReference>
<dbReference type="Gene3D" id="3.40.1580.20">
    <property type="entry name" value="Syd protein"/>
    <property type="match status" value="1"/>
</dbReference>
<dbReference type="HAMAP" id="MF_01104">
    <property type="entry name" value="Syd"/>
    <property type="match status" value="1"/>
</dbReference>
<dbReference type="InterPro" id="IPR009948">
    <property type="entry name" value="Syd"/>
</dbReference>
<dbReference type="InterPro" id="IPR038228">
    <property type="entry name" value="Syd_sf"/>
</dbReference>
<dbReference type="NCBIfam" id="NF003439">
    <property type="entry name" value="PRK04968.1"/>
    <property type="match status" value="1"/>
</dbReference>
<dbReference type="Pfam" id="PF07348">
    <property type="entry name" value="Syd"/>
    <property type="match status" value="1"/>
</dbReference>
<evidence type="ECO:0000255" key="1">
    <source>
        <dbReference type="HAMAP-Rule" id="MF_01104"/>
    </source>
</evidence>
<sequence length="181" mass="20601">MTQRAQDALLSFSQRYVDAWQQQHQSLPRNEELVDIVSPCVEEKSGDAVLWKHYPREQFADFTNVETGIELTLHEDVKTFYGAQFSADMNATFDGNELTLLQIWSDDDFECLQENILGHLVTQRRLKLKPTVFIAATDAELDVISICNLTGNVILERLGTKNRDVLAETLAEFLEKLQPAV</sequence>
<accession>B7VIV3</accession>